<protein>
    <recommendedName>
        <fullName evidence="1">Cysteine--tRNA ligase</fullName>
        <ecNumber evidence="1">6.1.1.16</ecNumber>
    </recommendedName>
    <alternativeName>
        <fullName evidence="1">Cysteinyl-tRNA synthetase</fullName>
        <shortName evidence="1">CysRS</shortName>
    </alternativeName>
</protein>
<dbReference type="EC" id="6.1.1.16" evidence="1"/>
<dbReference type="EMBL" id="CP000655">
    <property type="protein sequence ID" value="ABP34076.1"/>
    <property type="molecule type" value="Genomic_DNA"/>
</dbReference>
<dbReference type="RefSeq" id="WP_011902701.1">
    <property type="nucleotide sequence ID" value="NC_009379.1"/>
</dbReference>
<dbReference type="SMR" id="A4SX62"/>
<dbReference type="GeneID" id="31481220"/>
<dbReference type="KEGG" id="pnu:Pnuc_0858"/>
<dbReference type="eggNOG" id="COG0215">
    <property type="taxonomic scope" value="Bacteria"/>
</dbReference>
<dbReference type="HOGENOM" id="CLU_013528_0_1_4"/>
<dbReference type="Proteomes" id="UP000000231">
    <property type="component" value="Chromosome"/>
</dbReference>
<dbReference type="GO" id="GO:0005829">
    <property type="term" value="C:cytosol"/>
    <property type="evidence" value="ECO:0007669"/>
    <property type="project" value="TreeGrafter"/>
</dbReference>
<dbReference type="GO" id="GO:0005524">
    <property type="term" value="F:ATP binding"/>
    <property type="evidence" value="ECO:0007669"/>
    <property type="project" value="UniProtKB-UniRule"/>
</dbReference>
<dbReference type="GO" id="GO:0004817">
    <property type="term" value="F:cysteine-tRNA ligase activity"/>
    <property type="evidence" value="ECO:0007669"/>
    <property type="project" value="UniProtKB-UniRule"/>
</dbReference>
<dbReference type="GO" id="GO:0008270">
    <property type="term" value="F:zinc ion binding"/>
    <property type="evidence" value="ECO:0007669"/>
    <property type="project" value="UniProtKB-UniRule"/>
</dbReference>
<dbReference type="GO" id="GO:0006423">
    <property type="term" value="P:cysteinyl-tRNA aminoacylation"/>
    <property type="evidence" value="ECO:0007669"/>
    <property type="project" value="UniProtKB-UniRule"/>
</dbReference>
<dbReference type="CDD" id="cd07963">
    <property type="entry name" value="Anticodon_Ia_Cys"/>
    <property type="match status" value="1"/>
</dbReference>
<dbReference type="CDD" id="cd00672">
    <property type="entry name" value="CysRS_core"/>
    <property type="match status" value="1"/>
</dbReference>
<dbReference type="FunFam" id="3.40.50.620:FF:000009">
    <property type="entry name" value="Cysteine--tRNA ligase"/>
    <property type="match status" value="1"/>
</dbReference>
<dbReference type="Gene3D" id="1.20.120.1910">
    <property type="entry name" value="Cysteine-tRNA ligase, C-terminal anti-codon recognition domain"/>
    <property type="match status" value="1"/>
</dbReference>
<dbReference type="Gene3D" id="3.40.50.620">
    <property type="entry name" value="HUPs"/>
    <property type="match status" value="1"/>
</dbReference>
<dbReference type="HAMAP" id="MF_00041">
    <property type="entry name" value="Cys_tRNA_synth"/>
    <property type="match status" value="1"/>
</dbReference>
<dbReference type="InterPro" id="IPR015803">
    <property type="entry name" value="Cys-tRNA-ligase"/>
</dbReference>
<dbReference type="InterPro" id="IPR015273">
    <property type="entry name" value="Cys-tRNA-synt_Ia_DALR"/>
</dbReference>
<dbReference type="InterPro" id="IPR024909">
    <property type="entry name" value="Cys-tRNA/MSH_ligase"/>
</dbReference>
<dbReference type="InterPro" id="IPR014729">
    <property type="entry name" value="Rossmann-like_a/b/a_fold"/>
</dbReference>
<dbReference type="InterPro" id="IPR032678">
    <property type="entry name" value="tRNA-synt_1_cat_dom"/>
</dbReference>
<dbReference type="InterPro" id="IPR009080">
    <property type="entry name" value="tRNAsynth_Ia_anticodon-bd"/>
</dbReference>
<dbReference type="NCBIfam" id="TIGR00435">
    <property type="entry name" value="cysS"/>
    <property type="match status" value="1"/>
</dbReference>
<dbReference type="PANTHER" id="PTHR10890:SF3">
    <property type="entry name" value="CYSTEINE--TRNA LIGASE, CYTOPLASMIC"/>
    <property type="match status" value="1"/>
</dbReference>
<dbReference type="PANTHER" id="PTHR10890">
    <property type="entry name" value="CYSTEINYL-TRNA SYNTHETASE"/>
    <property type="match status" value="1"/>
</dbReference>
<dbReference type="Pfam" id="PF09190">
    <property type="entry name" value="DALR_2"/>
    <property type="match status" value="1"/>
</dbReference>
<dbReference type="Pfam" id="PF01406">
    <property type="entry name" value="tRNA-synt_1e"/>
    <property type="match status" value="1"/>
</dbReference>
<dbReference type="PRINTS" id="PR00983">
    <property type="entry name" value="TRNASYNTHCYS"/>
</dbReference>
<dbReference type="SMART" id="SM00840">
    <property type="entry name" value="DALR_2"/>
    <property type="match status" value="1"/>
</dbReference>
<dbReference type="SUPFAM" id="SSF47323">
    <property type="entry name" value="Anticodon-binding domain of a subclass of class I aminoacyl-tRNA synthetases"/>
    <property type="match status" value="1"/>
</dbReference>
<dbReference type="SUPFAM" id="SSF52374">
    <property type="entry name" value="Nucleotidylyl transferase"/>
    <property type="match status" value="1"/>
</dbReference>
<gene>
    <name evidence="1" type="primary">cysS</name>
    <name type="ordered locus">Pnuc_0858</name>
</gene>
<accession>A4SX62</accession>
<evidence type="ECO:0000255" key="1">
    <source>
        <dbReference type="HAMAP-Rule" id="MF_00041"/>
    </source>
</evidence>
<feature type="chain" id="PRO_0000332870" description="Cysteine--tRNA ligase">
    <location>
        <begin position="1"/>
        <end position="473"/>
    </location>
</feature>
<feature type="short sequence motif" description="'HIGH' region">
    <location>
        <begin position="30"/>
        <end position="40"/>
    </location>
</feature>
<feature type="short sequence motif" description="'KMSKS' region">
    <location>
        <begin position="277"/>
        <end position="281"/>
    </location>
</feature>
<feature type="binding site" evidence="1">
    <location>
        <position position="28"/>
    </location>
    <ligand>
        <name>Zn(2+)</name>
        <dbReference type="ChEBI" id="CHEBI:29105"/>
    </ligand>
</feature>
<feature type="binding site" evidence="1">
    <location>
        <position position="212"/>
    </location>
    <ligand>
        <name>Zn(2+)</name>
        <dbReference type="ChEBI" id="CHEBI:29105"/>
    </ligand>
</feature>
<feature type="binding site" evidence="1">
    <location>
        <position position="237"/>
    </location>
    <ligand>
        <name>Zn(2+)</name>
        <dbReference type="ChEBI" id="CHEBI:29105"/>
    </ligand>
</feature>
<feature type="binding site" evidence="1">
    <location>
        <position position="241"/>
    </location>
    <ligand>
        <name>Zn(2+)</name>
        <dbReference type="ChEBI" id="CHEBI:29105"/>
    </ligand>
</feature>
<feature type="binding site" evidence="1">
    <location>
        <position position="280"/>
    </location>
    <ligand>
        <name>ATP</name>
        <dbReference type="ChEBI" id="CHEBI:30616"/>
    </ligand>
</feature>
<keyword id="KW-0030">Aminoacyl-tRNA synthetase</keyword>
<keyword id="KW-0067">ATP-binding</keyword>
<keyword id="KW-0963">Cytoplasm</keyword>
<keyword id="KW-0436">Ligase</keyword>
<keyword id="KW-0479">Metal-binding</keyword>
<keyword id="KW-0547">Nucleotide-binding</keyword>
<keyword id="KW-0648">Protein biosynthesis</keyword>
<keyword id="KW-1185">Reference proteome</keyword>
<keyword id="KW-0862">Zinc</keyword>
<name>SYC_POLAQ</name>
<comment type="catalytic activity">
    <reaction evidence="1">
        <text>tRNA(Cys) + L-cysteine + ATP = L-cysteinyl-tRNA(Cys) + AMP + diphosphate</text>
        <dbReference type="Rhea" id="RHEA:17773"/>
        <dbReference type="Rhea" id="RHEA-COMP:9661"/>
        <dbReference type="Rhea" id="RHEA-COMP:9679"/>
        <dbReference type="ChEBI" id="CHEBI:30616"/>
        <dbReference type="ChEBI" id="CHEBI:33019"/>
        <dbReference type="ChEBI" id="CHEBI:35235"/>
        <dbReference type="ChEBI" id="CHEBI:78442"/>
        <dbReference type="ChEBI" id="CHEBI:78517"/>
        <dbReference type="ChEBI" id="CHEBI:456215"/>
        <dbReference type="EC" id="6.1.1.16"/>
    </reaction>
</comment>
<comment type="cofactor">
    <cofactor evidence="1">
        <name>Zn(2+)</name>
        <dbReference type="ChEBI" id="CHEBI:29105"/>
    </cofactor>
    <text evidence="1">Binds 1 zinc ion per subunit.</text>
</comment>
<comment type="subunit">
    <text evidence="1">Monomer.</text>
</comment>
<comment type="subcellular location">
    <subcellularLocation>
        <location evidence="1">Cytoplasm</location>
    </subcellularLocation>
</comment>
<comment type="similarity">
    <text evidence="1">Belongs to the class-I aminoacyl-tRNA synthetase family.</text>
</comment>
<organism>
    <name type="scientific">Polynucleobacter asymbioticus (strain DSM 18221 / CIP 109841 / QLW-P1DMWA-1)</name>
    <name type="common">Polynucleobacter necessarius subsp. asymbioticus</name>
    <dbReference type="NCBI Taxonomy" id="312153"/>
    <lineage>
        <taxon>Bacteria</taxon>
        <taxon>Pseudomonadati</taxon>
        <taxon>Pseudomonadota</taxon>
        <taxon>Betaproteobacteria</taxon>
        <taxon>Burkholderiales</taxon>
        <taxon>Burkholderiaceae</taxon>
        <taxon>Polynucleobacter</taxon>
    </lineage>
</organism>
<sequence length="473" mass="53136">MLQIYNTLSRSKQVFKPIVPGKVKMYVCGMTVYDFCHIGHARVMIVFDMVVRWLRASGYEVQYVRNITDIDDKIIKRALENSEPISALTNRFIAAMHADSDELGLMHPDQEPRATDYIQQMQGMIGKLIENELAYQGEDGDVNFAVRLLPRYGQLSGKTLDELNAGERVAIGGGKRDPLDFVLWKSAKPEEPADTRWNSPWGEGRPGWHIECSAMSCDLLGAHFDIHGGGADLQFPHHENEIAQSEGALYGQNRQENDAPFVNYWMHNGHIRVNEEKMSKSLGNFFLIRDVLKSFDPEVVRFFMLKAHYRSPINYSDAQLEEARSGLTRLYTALTHIPEVDTVPIDLQNPWAKRFADAMNDDFNTPEAIAVLFDLASEVNRAQGAEKQMLAGLLKSLGGTLNFLQRDPTNFLQAGSKDQSGLSSEQIEEHIAARVAAKQAKDFAKADGIRKALLEQGVVLEDKPGGITEWRRA</sequence>
<reference key="1">
    <citation type="journal article" date="2012" name="Stand. Genomic Sci.">
        <title>Complete genome sequence of Polynucleobacter necessarius subsp. asymbioticus type strain (QLW-P1DMWA-1(T)).</title>
        <authorList>
            <person name="Meincke L."/>
            <person name="Copeland A."/>
            <person name="Lapidus A."/>
            <person name="Lucas S."/>
            <person name="Berry K.W."/>
            <person name="Del Rio T.G."/>
            <person name="Hammon N."/>
            <person name="Dalin E."/>
            <person name="Tice H."/>
            <person name="Pitluck S."/>
            <person name="Richardson P."/>
            <person name="Bruce D."/>
            <person name="Goodwin L."/>
            <person name="Han C."/>
            <person name="Tapia R."/>
            <person name="Detter J.C."/>
            <person name="Schmutz J."/>
            <person name="Brettin T."/>
            <person name="Larimer F."/>
            <person name="Land M."/>
            <person name="Hauser L."/>
            <person name="Kyrpides N.C."/>
            <person name="Ivanova N."/>
            <person name="Goker M."/>
            <person name="Woyke T."/>
            <person name="Wu Q.L."/>
            <person name="Pockl M."/>
            <person name="Hahn M.W."/>
            <person name="Klenk H.P."/>
        </authorList>
    </citation>
    <scope>NUCLEOTIDE SEQUENCE [LARGE SCALE GENOMIC DNA]</scope>
    <source>
        <strain>DSM 18221 / CIP 109841 / QLW-P1DMWA-1</strain>
    </source>
</reference>
<proteinExistence type="inferred from homology"/>